<name>ENO_PARXL</name>
<sequence>MSAIVDIIGREILDSRGNPTVECDVLLESGTMGRAAVPSGASTGSREAIELRDGEAGRYGGKGVLKAVEHINTEISEAIMGLDASEQAFLDKTLLELDGTDNKSRLGANAMLAVSMAVAKAAAEEAGLPLYRYFGGSGAMQLPVPMMNIVNGGAHANNSLDIQEFMIVPVSQPTFREALRCGAEVFHALKKILSDRGMSTAVGDEGGFAPNFGSNDECLSTILQAIEKAGYRAGEDVLLALDCAASEFYHDGKYQLAGEGLQLSSTEFTDYLANLADKFPIVSIEDGMHESDWAGWKTLTDKLGKKVQLVGDDLFVTNTRILKEGIEKGIANSILIKINQIGTLTETFAAIEMAKRAGYTAVISHRSGETEDSTIADIAVGLNAGQIKTGSLSRSDRISKYNQLLRIEEDLGDIASYPGKSAFYNLR</sequence>
<gene>
    <name evidence="1" type="primary">eno</name>
    <name type="ordered locus">Bxeno_A2844</name>
    <name type="ORF">Bxe_A1573</name>
</gene>
<keyword id="KW-0963">Cytoplasm</keyword>
<keyword id="KW-0324">Glycolysis</keyword>
<keyword id="KW-0456">Lyase</keyword>
<keyword id="KW-0460">Magnesium</keyword>
<keyword id="KW-0479">Metal-binding</keyword>
<keyword id="KW-1185">Reference proteome</keyword>
<keyword id="KW-0964">Secreted</keyword>
<reference key="1">
    <citation type="journal article" date="2006" name="Proc. Natl. Acad. Sci. U.S.A.">
        <title>Burkholderia xenovorans LB400 harbors a multi-replicon, 9.73-Mbp genome shaped for versatility.</title>
        <authorList>
            <person name="Chain P.S.G."/>
            <person name="Denef V.J."/>
            <person name="Konstantinidis K.T."/>
            <person name="Vergez L.M."/>
            <person name="Agullo L."/>
            <person name="Reyes V.L."/>
            <person name="Hauser L."/>
            <person name="Cordova M."/>
            <person name="Gomez L."/>
            <person name="Gonzalez M."/>
            <person name="Land M."/>
            <person name="Lao V."/>
            <person name="Larimer F."/>
            <person name="LiPuma J.J."/>
            <person name="Mahenthiralingam E."/>
            <person name="Malfatti S.A."/>
            <person name="Marx C.J."/>
            <person name="Parnell J.J."/>
            <person name="Ramette A."/>
            <person name="Richardson P."/>
            <person name="Seeger M."/>
            <person name="Smith D."/>
            <person name="Spilker T."/>
            <person name="Sul W.J."/>
            <person name="Tsoi T.V."/>
            <person name="Ulrich L.E."/>
            <person name="Zhulin I.B."/>
            <person name="Tiedje J.M."/>
        </authorList>
    </citation>
    <scope>NUCLEOTIDE SEQUENCE [LARGE SCALE GENOMIC DNA]</scope>
    <source>
        <strain>LB400</strain>
    </source>
</reference>
<protein>
    <recommendedName>
        <fullName evidence="1">Enolase</fullName>
        <ecNumber evidence="1">4.2.1.11</ecNumber>
    </recommendedName>
    <alternativeName>
        <fullName evidence="1">2-phospho-D-glycerate hydro-lyase</fullName>
    </alternativeName>
    <alternativeName>
        <fullName evidence="1">2-phosphoglycerate dehydratase</fullName>
    </alternativeName>
</protein>
<proteinExistence type="inferred from homology"/>
<feature type="chain" id="PRO_0000267011" description="Enolase">
    <location>
        <begin position="1"/>
        <end position="427"/>
    </location>
</feature>
<feature type="active site" description="Proton donor" evidence="1">
    <location>
        <position position="205"/>
    </location>
</feature>
<feature type="active site" description="Proton acceptor" evidence="1">
    <location>
        <position position="337"/>
    </location>
</feature>
<feature type="binding site" evidence="1">
    <location>
        <position position="163"/>
    </location>
    <ligand>
        <name>(2R)-2-phosphoglycerate</name>
        <dbReference type="ChEBI" id="CHEBI:58289"/>
    </ligand>
</feature>
<feature type="binding site" evidence="1">
    <location>
        <position position="242"/>
    </location>
    <ligand>
        <name>Mg(2+)</name>
        <dbReference type="ChEBI" id="CHEBI:18420"/>
    </ligand>
</feature>
<feature type="binding site" evidence="1">
    <location>
        <position position="285"/>
    </location>
    <ligand>
        <name>Mg(2+)</name>
        <dbReference type="ChEBI" id="CHEBI:18420"/>
    </ligand>
</feature>
<feature type="binding site" evidence="1">
    <location>
        <position position="312"/>
    </location>
    <ligand>
        <name>Mg(2+)</name>
        <dbReference type="ChEBI" id="CHEBI:18420"/>
    </ligand>
</feature>
<feature type="binding site" evidence="1">
    <location>
        <position position="337"/>
    </location>
    <ligand>
        <name>(2R)-2-phosphoglycerate</name>
        <dbReference type="ChEBI" id="CHEBI:58289"/>
    </ligand>
</feature>
<feature type="binding site" evidence="1">
    <location>
        <position position="366"/>
    </location>
    <ligand>
        <name>(2R)-2-phosphoglycerate</name>
        <dbReference type="ChEBI" id="CHEBI:58289"/>
    </ligand>
</feature>
<feature type="binding site" evidence="1">
    <location>
        <position position="367"/>
    </location>
    <ligand>
        <name>(2R)-2-phosphoglycerate</name>
        <dbReference type="ChEBI" id="CHEBI:58289"/>
    </ligand>
</feature>
<feature type="binding site" evidence="1">
    <location>
        <position position="388"/>
    </location>
    <ligand>
        <name>(2R)-2-phosphoglycerate</name>
        <dbReference type="ChEBI" id="CHEBI:58289"/>
    </ligand>
</feature>
<evidence type="ECO:0000255" key="1">
    <source>
        <dbReference type="HAMAP-Rule" id="MF_00318"/>
    </source>
</evidence>
<organism>
    <name type="scientific">Paraburkholderia xenovorans (strain LB400)</name>
    <dbReference type="NCBI Taxonomy" id="266265"/>
    <lineage>
        <taxon>Bacteria</taxon>
        <taxon>Pseudomonadati</taxon>
        <taxon>Pseudomonadota</taxon>
        <taxon>Betaproteobacteria</taxon>
        <taxon>Burkholderiales</taxon>
        <taxon>Burkholderiaceae</taxon>
        <taxon>Paraburkholderia</taxon>
    </lineage>
</organism>
<accession>Q13X07</accession>
<dbReference type="EC" id="4.2.1.11" evidence="1"/>
<dbReference type="EMBL" id="CP000270">
    <property type="protein sequence ID" value="ABE31382.1"/>
    <property type="molecule type" value="Genomic_DNA"/>
</dbReference>
<dbReference type="RefSeq" id="WP_007181327.1">
    <property type="nucleotide sequence ID" value="NZ_CP008760.1"/>
</dbReference>
<dbReference type="SMR" id="Q13X07"/>
<dbReference type="STRING" id="266265.Bxe_A1573"/>
<dbReference type="KEGG" id="bxb:DR64_3734"/>
<dbReference type="KEGG" id="bxe:Bxe_A1573"/>
<dbReference type="eggNOG" id="COG0148">
    <property type="taxonomic scope" value="Bacteria"/>
</dbReference>
<dbReference type="OrthoDB" id="9804716at2"/>
<dbReference type="UniPathway" id="UPA00109">
    <property type="reaction ID" value="UER00187"/>
</dbReference>
<dbReference type="Proteomes" id="UP000001817">
    <property type="component" value="Chromosome 1"/>
</dbReference>
<dbReference type="GO" id="GO:0009986">
    <property type="term" value="C:cell surface"/>
    <property type="evidence" value="ECO:0007669"/>
    <property type="project" value="UniProtKB-SubCell"/>
</dbReference>
<dbReference type="GO" id="GO:0005576">
    <property type="term" value="C:extracellular region"/>
    <property type="evidence" value="ECO:0007669"/>
    <property type="project" value="UniProtKB-SubCell"/>
</dbReference>
<dbReference type="GO" id="GO:0000015">
    <property type="term" value="C:phosphopyruvate hydratase complex"/>
    <property type="evidence" value="ECO:0007669"/>
    <property type="project" value="InterPro"/>
</dbReference>
<dbReference type="GO" id="GO:0000287">
    <property type="term" value="F:magnesium ion binding"/>
    <property type="evidence" value="ECO:0007669"/>
    <property type="project" value="UniProtKB-UniRule"/>
</dbReference>
<dbReference type="GO" id="GO:0004634">
    <property type="term" value="F:phosphopyruvate hydratase activity"/>
    <property type="evidence" value="ECO:0007669"/>
    <property type="project" value="UniProtKB-UniRule"/>
</dbReference>
<dbReference type="GO" id="GO:0006096">
    <property type="term" value="P:glycolytic process"/>
    <property type="evidence" value="ECO:0007669"/>
    <property type="project" value="UniProtKB-UniRule"/>
</dbReference>
<dbReference type="CDD" id="cd03313">
    <property type="entry name" value="enolase"/>
    <property type="match status" value="1"/>
</dbReference>
<dbReference type="FunFam" id="3.20.20.120:FF:000001">
    <property type="entry name" value="Enolase"/>
    <property type="match status" value="1"/>
</dbReference>
<dbReference type="FunFam" id="3.30.390.10:FF:000001">
    <property type="entry name" value="Enolase"/>
    <property type="match status" value="1"/>
</dbReference>
<dbReference type="Gene3D" id="3.20.20.120">
    <property type="entry name" value="Enolase-like C-terminal domain"/>
    <property type="match status" value="1"/>
</dbReference>
<dbReference type="Gene3D" id="3.30.390.10">
    <property type="entry name" value="Enolase-like, N-terminal domain"/>
    <property type="match status" value="1"/>
</dbReference>
<dbReference type="HAMAP" id="MF_00318">
    <property type="entry name" value="Enolase"/>
    <property type="match status" value="1"/>
</dbReference>
<dbReference type="InterPro" id="IPR000941">
    <property type="entry name" value="Enolase"/>
</dbReference>
<dbReference type="InterPro" id="IPR036849">
    <property type="entry name" value="Enolase-like_C_sf"/>
</dbReference>
<dbReference type="InterPro" id="IPR029017">
    <property type="entry name" value="Enolase-like_N"/>
</dbReference>
<dbReference type="InterPro" id="IPR020810">
    <property type="entry name" value="Enolase_C"/>
</dbReference>
<dbReference type="InterPro" id="IPR020809">
    <property type="entry name" value="Enolase_CS"/>
</dbReference>
<dbReference type="InterPro" id="IPR020811">
    <property type="entry name" value="Enolase_N"/>
</dbReference>
<dbReference type="NCBIfam" id="TIGR01060">
    <property type="entry name" value="eno"/>
    <property type="match status" value="1"/>
</dbReference>
<dbReference type="PANTHER" id="PTHR11902">
    <property type="entry name" value="ENOLASE"/>
    <property type="match status" value="1"/>
</dbReference>
<dbReference type="PANTHER" id="PTHR11902:SF1">
    <property type="entry name" value="ENOLASE"/>
    <property type="match status" value="1"/>
</dbReference>
<dbReference type="Pfam" id="PF00113">
    <property type="entry name" value="Enolase_C"/>
    <property type="match status" value="1"/>
</dbReference>
<dbReference type="Pfam" id="PF03952">
    <property type="entry name" value="Enolase_N"/>
    <property type="match status" value="1"/>
</dbReference>
<dbReference type="PIRSF" id="PIRSF001400">
    <property type="entry name" value="Enolase"/>
    <property type="match status" value="1"/>
</dbReference>
<dbReference type="PRINTS" id="PR00148">
    <property type="entry name" value="ENOLASE"/>
</dbReference>
<dbReference type="SFLD" id="SFLDS00001">
    <property type="entry name" value="Enolase"/>
    <property type="match status" value="1"/>
</dbReference>
<dbReference type="SFLD" id="SFLDF00002">
    <property type="entry name" value="enolase"/>
    <property type="match status" value="1"/>
</dbReference>
<dbReference type="SMART" id="SM01192">
    <property type="entry name" value="Enolase_C"/>
    <property type="match status" value="1"/>
</dbReference>
<dbReference type="SMART" id="SM01193">
    <property type="entry name" value="Enolase_N"/>
    <property type="match status" value="1"/>
</dbReference>
<dbReference type="SUPFAM" id="SSF51604">
    <property type="entry name" value="Enolase C-terminal domain-like"/>
    <property type="match status" value="1"/>
</dbReference>
<dbReference type="SUPFAM" id="SSF54826">
    <property type="entry name" value="Enolase N-terminal domain-like"/>
    <property type="match status" value="1"/>
</dbReference>
<dbReference type="PROSITE" id="PS00164">
    <property type="entry name" value="ENOLASE"/>
    <property type="match status" value="1"/>
</dbReference>
<comment type="function">
    <text evidence="1">Catalyzes the reversible conversion of 2-phosphoglycerate (2-PG) into phosphoenolpyruvate (PEP). It is essential for the degradation of carbohydrates via glycolysis.</text>
</comment>
<comment type="catalytic activity">
    <reaction evidence="1">
        <text>(2R)-2-phosphoglycerate = phosphoenolpyruvate + H2O</text>
        <dbReference type="Rhea" id="RHEA:10164"/>
        <dbReference type="ChEBI" id="CHEBI:15377"/>
        <dbReference type="ChEBI" id="CHEBI:58289"/>
        <dbReference type="ChEBI" id="CHEBI:58702"/>
        <dbReference type="EC" id="4.2.1.11"/>
    </reaction>
</comment>
<comment type="cofactor">
    <cofactor evidence="1">
        <name>Mg(2+)</name>
        <dbReference type="ChEBI" id="CHEBI:18420"/>
    </cofactor>
    <text evidence="1">Binds a second Mg(2+) ion via substrate during catalysis.</text>
</comment>
<comment type="pathway">
    <text evidence="1">Carbohydrate degradation; glycolysis; pyruvate from D-glyceraldehyde 3-phosphate: step 4/5.</text>
</comment>
<comment type="subcellular location">
    <subcellularLocation>
        <location evidence="1">Cytoplasm</location>
    </subcellularLocation>
    <subcellularLocation>
        <location evidence="1">Secreted</location>
    </subcellularLocation>
    <subcellularLocation>
        <location evidence="1">Cell surface</location>
    </subcellularLocation>
    <text evidence="1">Fractions of enolase are present in both the cytoplasm and on the cell surface.</text>
</comment>
<comment type="similarity">
    <text evidence="1">Belongs to the enolase family.</text>
</comment>